<evidence type="ECO:0000250" key="1"/>
<evidence type="ECO:0000255" key="2">
    <source>
        <dbReference type="PROSITE-ProRule" id="PRU00723"/>
    </source>
</evidence>
<evidence type="ECO:0000269" key="3">
    <source>
    </source>
</evidence>
<evidence type="ECO:0000305" key="4"/>
<accession>Q94250</accession>
<accession>B3WFU7</accession>
<accession>B3WFU8</accession>
<organism>
    <name type="scientific">Caenorhabditis elegans</name>
    <dbReference type="NCBI Taxonomy" id="6239"/>
    <lineage>
        <taxon>Eukaryota</taxon>
        <taxon>Metazoa</taxon>
        <taxon>Ecdysozoa</taxon>
        <taxon>Nematoda</taxon>
        <taxon>Chromadorea</taxon>
        <taxon>Rhabditida</taxon>
        <taxon>Rhabditina</taxon>
        <taxon>Rhabditomorpha</taxon>
        <taxon>Rhabditoidea</taxon>
        <taxon>Rhabditidae</taxon>
        <taxon>Peloderinae</taxon>
        <taxon>Caenorhabditis</taxon>
    </lineage>
</organism>
<proteinExistence type="evidence at protein level"/>
<dbReference type="EMBL" id="FO081289">
    <property type="protein sequence ID" value="CCD70500.1"/>
    <property type="molecule type" value="Genomic_DNA"/>
</dbReference>
<dbReference type="EMBL" id="FO081289">
    <property type="protein sequence ID" value="CCD70501.1"/>
    <property type="molecule type" value="Genomic_DNA"/>
</dbReference>
<dbReference type="EMBL" id="FO081289">
    <property type="protein sequence ID" value="CCD70502.1"/>
    <property type="molecule type" value="Genomic_DNA"/>
</dbReference>
<dbReference type="PIR" id="T29715">
    <property type="entry name" value="T29715"/>
</dbReference>
<dbReference type="RefSeq" id="NP_001129931.1">
    <molecule id="Q94250-2"/>
    <property type="nucleotide sequence ID" value="NM_001136459.4"/>
</dbReference>
<dbReference type="RefSeq" id="NP_001129932.1">
    <property type="nucleotide sequence ID" value="NM_001136460.1"/>
</dbReference>
<dbReference type="RefSeq" id="NP_001257281.1">
    <molecule id="Q94250-1"/>
    <property type="nucleotide sequence ID" value="NM_001270352.4"/>
</dbReference>
<dbReference type="RefSeq" id="NP_001379924.1">
    <molecule id="Q94250-3"/>
    <property type="nucleotide sequence ID" value="NM_001392916.1"/>
</dbReference>
<dbReference type="SMR" id="Q94250"/>
<dbReference type="BioGRID" id="51624">
    <property type="interactions" value="4"/>
</dbReference>
<dbReference type="FunCoup" id="Q94250">
    <property type="interactions" value="149"/>
</dbReference>
<dbReference type="STRING" id="6239.K02H8.1a.1"/>
<dbReference type="PaxDb" id="6239-K02H8.1a"/>
<dbReference type="EnsemblMetazoa" id="K02H8.1a.1">
    <molecule id="Q94250-1"/>
    <property type="protein sequence ID" value="K02H8.1a.1"/>
    <property type="gene ID" value="WBGene00019347"/>
</dbReference>
<dbReference type="EnsemblMetazoa" id="K02H8.1a.2">
    <molecule id="Q94250-1"/>
    <property type="protein sequence ID" value="K02H8.1a.2"/>
    <property type="gene ID" value="WBGene00019347"/>
</dbReference>
<dbReference type="EnsemblMetazoa" id="K02H8.1b.1">
    <molecule id="Q94250-2"/>
    <property type="protein sequence ID" value="K02H8.1b.1"/>
    <property type="gene ID" value="WBGene00019347"/>
</dbReference>
<dbReference type="EnsemblMetazoa" id="K02H8.1c.1">
    <molecule id="Q94250-3"/>
    <property type="protein sequence ID" value="K02H8.1c.1"/>
    <property type="gene ID" value="WBGene00019347"/>
</dbReference>
<dbReference type="EnsemblMetazoa" id="K02H8.1c.2">
    <molecule id="Q94250-3"/>
    <property type="protein sequence ID" value="K02H8.1c.2"/>
    <property type="gene ID" value="WBGene00019347"/>
</dbReference>
<dbReference type="EnsemblMetazoa" id="K02H8.1c.3">
    <molecule id="Q94250-3"/>
    <property type="protein sequence ID" value="K02H8.1c.3"/>
    <property type="gene ID" value="WBGene00019347"/>
</dbReference>
<dbReference type="GeneID" id="186912"/>
<dbReference type="KEGG" id="cel:CELE_K02H8.1"/>
<dbReference type="UCSC" id="K02H8.1">
    <molecule id="Q94250-1"/>
    <property type="organism name" value="c. elegans"/>
</dbReference>
<dbReference type="AGR" id="WB:WBGene00019347"/>
<dbReference type="CTD" id="186912"/>
<dbReference type="WormBase" id="K02H8.1a">
    <molecule id="Q94250-1"/>
    <property type="protein sequence ID" value="CE39946"/>
    <property type="gene ID" value="WBGene00019347"/>
    <property type="gene designation" value="mbl-1"/>
</dbReference>
<dbReference type="WormBase" id="K02H8.1b">
    <molecule id="Q94250-2"/>
    <property type="protein sequence ID" value="CE42747"/>
    <property type="gene ID" value="WBGene00019347"/>
    <property type="gene designation" value="mbl-1"/>
</dbReference>
<dbReference type="WormBase" id="K02H8.1c">
    <molecule id="Q94250-3"/>
    <property type="protein sequence ID" value="CE42814"/>
    <property type="gene ID" value="WBGene00019347"/>
    <property type="gene designation" value="mbl-1"/>
</dbReference>
<dbReference type="eggNOG" id="KOG2494">
    <property type="taxonomic scope" value="Eukaryota"/>
</dbReference>
<dbReference type="GeneTree" id="ENSGT00950000182897"/>
<dbReference type="InParanoid" id="Q94250"/>
<dbReference type="OMA" id="CEYMQPP"/>
<dbReference type="OrthoDB" id="6285980at2759"/>
<dbReference type="PhylomeDB" id="Q94250"/>
<dbReference type="PRO" id="PR:Q94250"/>
<dbReference type="Proteomes" id="UP000001940">
    <property type="component" value="Chromosome X"/>
</dbReference>
<dbReference type="Bgee" id="WBGene00019347">
    <property type="expression patterns" value="Expressed in pharyngeal muscle cell (C elegans) and 3 other cell types or tissues"/>
</dbReference>
<dbReference type="ExpressionAtlas" id="Q94250">
    <property type="expression patterns" value="baseline and differential"/>
</dbReference>
<dbReference type="GO" id="GO:0005737">
    <property type="term" value="C:cytoplasm"/>
    <property type="evidence" value="ECO:0000318"/>
    <property type="project" value="GO_Central"/>
</dbReference>
<dbReference type="GO" id="GO:0005654">
    <property type="term" value="C:nucleoplasm"/>
    <property type="evidence" value="ECO:0000318"/>
    <property type="project" value="GO_Central"/>
</dbReference>
<dbReference type="GO" id="GO:0005634">
    <property type="term" value="C:nucleus"/>
    <property type="evidence" value="ECO:0000250"/>
    <property type="project" value="UniProtKB"/>
</dbReference>
<dbReference type="GO" id="GO:0003723">
    <property type="term" value="F:RNA binding"/>
    <property type="evidence" value="ECO:0000318"/>
    <property type="project" value="GO_Central"/>
</dbReference>
<dbReference type="GO" id="GO:0008270">
    <property type="term" value="F:zinc ion binding"/>
    <property type="evidence" value="ECO:0007669"/>
    <property type="project" value="UniProtKB-KW"/>
</dbReference>
<dbReference type="GO" id="GO:0043484">
    <property type="term" value="P:regulation of RNA splicing"/>
    <property type="evidence" value="ECO:0000318"/>
    <property type="project" value="GO_Central"/>
</dbReference>
<dbReference type="FunFam" id="3.30.1370.210:FF:000005">
    <property type="entry name" value="Muscleblind, isoform M"/>
    <property type="match status" value="1"/>
</dbReference>
<dbReference type="Gene3D" id="3.30.1370.210">
    <property type="match status" value="1"/>
</dbReference>
<dbReference type="InterPro" id="IPR054429">
    <property type="entry name" value="Znf-CCCH_Muscleblind-like"/>
</dbReference>
<dbReference type="InterPro" id="IPR000571">
    <property type="entry name" value="Znf_CCCH"/>
</dbReference>
<dbReference type="PANTHER" id="PTHR12675">
    <property type="entry name" value="MUSCLEBLIND-LIKE PROTEIN"/>
    <property type="match status" value="1"/>
</dbReference>
<dbReference type="PANTHER" id="PTHR12675:SF12">
    <property type="entry name" value="PROTEIN MUSCLEBLIND"/>
    <property type="match status" value="1"/>
</dbReference>
<dbReference type="Pfam" id="PF22628">
    <property type="entry name" value="zf-CCCH_10"/>
    <property type="match status" value="2"/>
</dbReference>
<dbReference type="SMART" id="SM00356">
    <property type="entry name" value="ZnF_C3H1"/>
    <property type="match status" value="2"/>
</dbReference>
<dbReference type="PROSITE" id="PS50103">
    <property type="entry name" value="ZF_C3H1"/>
    <property type="match status" value="2"/>
</dbReference>
<keyword id="KW-0025">Alternative splicing</keyword>
<keyword id="KW-0479">Metal-binding</keyword>
<keyword id="KW-0539">Nucleus</keyword>
<keyword id="KW-1185">Reference proteome</keyword>
<keyword id="KW-0677">Repeat</keyword>
<keyword id="KW-0694">RNA-binding</keyword>
<keyword id="KW-0862">Zinc</keyword>
<keyword id="KW-0863">Zinc-finger</keyword>
<gene>
    <name type="primary">mbl-1</name>
    <name type="ORF">K02H8.1</name>
</gene>
<name>MBL_CAEEL</name>
<sequence>MFDENSNAAGTTPVASSLAATPNANLVSQVFNVKDSRWLQVEVCREFLRGQCARSDQECKFAHPPPNVDVQQGRVTACYDSIKGRCTRENPKCKYLHPPQHIKDQLLINGRNHLALKNLLSAQLNQTGTPMVNPMMALQQQAAAVNLIPNTPIYPPYYNGMMYPQVLQDPYTAAAVNQVLDSNQEYHSPPTDKKNQQLQTAALLGNVGGLLSAQSAAAFMANSSAAAAAAQQTPSPLLRLQRKRALEEENTNGNDMTSAAAAHTQLLSLAAGAVPMKRPTLDKNGAMLYSPVAQQAQQFNPYLLQTLQGYVPAVSCEYMQPPPF</sequence>
<reference key="1">
    <citation type="journal article" date="1998" name="Science">
        <title>Genome sequence of the nematode C. elegans: a platform for investigating biology.</title>
        <authorList>
            <consortium name="The C. elegans sequencing consortium"/>
        </authorList>
    </citation>
    <scope>NUCLEOTIDE SEQUENCE [LARGE SCALE GENOMIC DNA]</scope>
    <scope>ALTERNATIVE SPLICING</scope>
    <source>
        <strain>Bristol N2</strain>
    </source>
</reference>
<reference key="2">
    <citation type="journal article" date="1997" name="Development">
        <title>Muscleblind, a gene required for photoreceptor differentiation in Drosophila, encodes novel nuclear Cys3His-type zinc-finger-containing proteins.</title>
        <authorList>
            <person name="Begemann G."/>
            <person name="Paricio N."/>
            <person name="Artero R."/>
            <person name="Kiss I."/>
            <person name="Perez-Alonso M."/>
            <person name="Mlodzik M."/>
        </authorList>
    </citation>
    <scope>IDENTIFICATION</scope>
</reference>
<reference key="3">
    <citation type="journal article" date="2009" name="J. Neurosci. Res.">
        <title>Identification of Caenorhabditis elegans K02H8.1 (CeMBL), a functional ortholog of mammalian MBNL proteins.</title>
        <authorList>
            <person name="Sasagawa N."/>
            <person name="Ohno E."/>
            <person name="Kino Y."/>
            <person name="Watanabe Y."/>
            <person name="Ishiura S."/>
        </authorList>
    </citation>
    <scope>FUNCTION</scope>
    <scope>RNA-BINDING</scope>
    <scope>TISSUE SPECIFICITY</scope>
    <scope>DISRUPTION PHENOTYPE</scope>
</reference>
<comment type="function">
    <text evidence="3">Binds to RNA with repeat sequences 5'-CUG-3' and 5'-CCUG-3'.</text>
</comment>
<comment type="subcellular location">
    <subcellularLocation>
        <location evidence="1">Nucleus</location>
    </subcellularLocation>
</comment>
<comment type="alternative products">
    <event type="alternative splicing"/>
    <isoform>
        <id>Q94250-1</id>
        <name>a</name>
        <sequence type="displayed"/>
    </isoform>
    <isoform>
        <id>Q94250-2</id>
        <name>b</name>
        <sequence type="described" ref="VSP_039465"/>
    </isoform>
    <isoform>
        <id>Q94250-3</id>
        <name>c</name>
        <sequence type="described" ref="VSP_039466"/>
    </isoform>
</comment>
<comment type="tissue specificity">
    <text evidence="3">Expressed in neurons around the pharynx.</text>
</comment>
<comment type="disruption phenotype">
    <text evidence="3">Reduced lifespan.</text>
</comment>
<comment type="similarity">
    <text evidence="4">Belongs to the muscleblind family.</text>
</comment>
<protein>
    <recommendedName>
        <fullName>Muscleblind-like protein</fullName>
        <shortName>CeMBL</shortName>
    </recommendedName>
</protein>
<feature type="chain" id="PRO_0000089182" description="Muscleblind-like protein">
    <location>
        <begin position="1"/>
        <end position="324"/>
    </location>
</feature>
<feature type="zinc finger region" description="C3H1-type 1" evidence="2">
    <location>
        <begin position="38"/>
        <end position="66"/>
    </location>
</feature>
<feature type="zinc finger region" description="C3H1-type 2" evidence="2">
    <location>
        <begin position="72"/>
        <end position="100"/>
    </location>
</feature>
<feature type="splice variant" id="VSP_039466" description="In isoform c." evidence="4">
    <location>
        <begin position="179"/>
        <end position="271"/>
    </location>
</feature>
<feature type="splice variant" id="VSP_039465" description="In isoform b." evidence="4">
    <location>
        <begin position="179"/>
        <end position="196"/>
    </location>
</feature>